<keyword id="KW-1185">Reference proteome</keyword>
<keyword id="KW-0687">Ribonucleoprotein</keyword>
<keyword id="KW-0689">Ribosomal protein</keyword>
<keyword id="KW-0694">RNA-binding</keyword>
<keyword id="KW-0699">rRNA-binding</keyword>
<comment type="function">
    <text evidence="1">Binds the lower part of the 30S subunit head. Binds mRNA in the 70S ribosome, positioning it for translation.</text>
</comment>
<comment type="subunit">
    <text evidence="1">Part of the 30S ribosomal subunit. Forms a tight complex with proteins S10 and S14.</text>
</comment>
<comment type="similarity">
    <text evidence="1">Belongs to the universal ribosomal protein uS3 family.</text>
</comment>
<reference key="1">
    <citation type="journal article" date="2007" name="PLoS Genet.">
        <title>A tale of two oxidation states: bacterial colonization of arsenic-rich environments.</title>
        <authorList>
            <person name="Muller D."/>
            <person name="Medigue C."/>
            <person name="Koechler S."/>
            <person name="Barbe V."/>
            <person name="Barakat M."/>
            <person name="Talla E."/>
            <person name="Bonnefoy V."/>
            <person name="Krin E."/>
            <person name="Arsene-Ploetze F."/>
            <person name="Carapito C."/>
            <person name="Chandler M."/>
            <person name="Cournoyer B."/>
            <person name="Cruveiller S."/>
            <person name="Dossat C."/>
            <person name="Duval S."/>
            <person name="Heymann M."/>
            <person name="Leize E."/>
            <person name="Lieutaud A."/>
            <person name="Lievremont D."/>
            <person name="Makita Y."/>
            <person name="Mangenot S."/>
            <person name="Nitschke W."/>
            <person name="Ortet P."/>
            <person name="Perdrial N."/>
            <person name="Schoepp B."/>
            <person name="Siguier P."/>
            <person name="Simeonova D.D."/>
            <person name="Rouy Z."/>
            <person name="Segurens B."/>
            <person name="Turlin E."/>
            <person name="Vallenet D."/>
            <person name="van Dorsselaer A."/>
            <person name="Weiss S."/>
            <person name="Weissenbach J."/>
            <person name="Lett M.-C."/>
            <person name="Danchin A."/>
            <person name="Bertin P.N."/>
        </authorList>
    </citation>
    <scope>NUCLEOTIDE SEQUENCE [LARGE SCALE GENOMIC DNA]</scope>
    <source>
        <strain>ULPAs1</strain>
    </source>
</reference>
<sequence>MGQKIHPTGFRLSVTRNWASRWYAGNSNFATMLNEDLKVRAYLKTKLKNASVGRVIIERPAKNARITIYSSRPGVVIGKKGEDIEVLKSALTKMMGVPVHVNIEEIRKPETDAQLIADSIAQQLEKRIMFRRAMKRAMQNAMRLGAQGIKIMSSGRLNGIEIARKEWYREGRVPLHTLRAEIDYGFGEAETTYGIIGIKVWVYKGDRLPSGEPPVDLTKEDDTKRRGPRRDDGKPSSRPRTARPEGQPGAAAAPGAAPAAKRVRAKKPDAAVDGAVPAEKAGE</sequence>
<name>RS3_HERAR</name>
<protein>
    <recommendedName>
        <fullName evidence="1">Small ribosomal subunit protein uS3</fullName>
    </recommendedName>
    <alternativeName>
        <fullName evidence="3">30S ribosomal protein S3</fullName>
    </alternativeName>
</protein>
<proteinExistence type="inferred from homology"/>
<feature type="chain" id="PRO_1000086127" description="Small ribosomal subunit protein uS3">
    <location>
        <begin position="1"/>
        <end position="283"/>
    </location>
</feature>
<feature type="domain" description="KH type-2" evidence="1">
    <location>
        <begin position="39"/>
        <end position="107"/>
    </location>
</feature>
<feature type="region of interest" description="Disordered" evidence="2">
    <location>
        <begin position="209"/>
        <end position="283"/>
    </location>
</feature>
<feature type="compositionally biased region" description="Basic and acidic residues" evidence="2">
    <location>
        <begin position="217"/>
        <end position="235"/>
    </location>
</feature>
<feature type="compositionally biased region" description="Low complexity" evidence="2">
    <location>
        <begin position="244"/>
        <end position="260"/>
    </location>
</feature>
<organism>
    <name type="scientific">Herminiimonas arsenicoxydans</name>
    <dbReference type="NCBI Taxonomy" id="204773"/>
    <lineage>
        <taxon>Bacteria</taxon>
        <taxon>Pseudomonadati</taxon>
        <taxon>Pseudomonadota</taxon>
        <taxon>Betaproteobacteria</taxon>
        <taxon>Burkholderiales</taxon>
        <taxon>Oxalobacteraceae</taxon>
        <taxon>Herminiimonas</taxon>
    </lineage>
</organism>
<evidence type="ECO:0000255" key="1">
    <source>
        <dbReference type="HAMAP-Rule" id="MF_01309"/>
    </source>
</evidence>
<evidence type="ECO:0000256" key="2">
    <source>
        <dbReference type="SAM" id="MobiDB-lite"/>
    </source>
</evidence>
<evidence type="ECO:0000305" key="3"/>
<gene>
    <name evidence="1" type="primary">rpsC</name>
    <name type="ordered locus">HEAR3160</name>
</gene>
<accession>A4G9T2</accession>
<dbReference type="EMBL" id="CU207211">
    <property type="protein sequence ID" value="CAL63269.1"/>
    <property type="molecule type" value="Genomic_DNA"/>
</dbReference>
<dbReference type="SMR" id="A4G9T2"/>
<dbReference type="STRING" id="204773.HEAR3160"/>
<dbReference type="KEGG" id="har:HEAR3160"/>
<dbReference type="eggNOG" id="COG0092">
    <property type="taxonomic scope" value="Bacteria"/>
</dbReference>
<dbReference type="HOGENOM" id="CLU_058591_0_2_4"/>
<dbReference type="OrthoDB" id="9806396at2"/>
<dbReference type="Proteomes" id="UP000006697">
    <property type="component" value="Chromosome"/>
</dbReference>
<dbReference type="GO" id="GO:0022627">
    <property type="term" value="C:cytosolic small ribosomal subunit"/>
    <property type="evidence" value="ECO:0007669"/>
    <property type="project" value="TreeGrafter"/>
</dbReference>
<dbReference type="GO" id="GO:0003729">
    <property type="term" value="F:mRNA binding"/>
    <property type="evidence" value="ECO:0007669"/>
    <property type="project" value="UniProtKB-UniRule"/>
</dbReference>
<dbReference type="GO" id="GO:0019843">
    <property type="term" value="F:rRNA binding"/>
    <property type="evidence" value="ECO:0007669"/>
    <property type="project" value="UniProtKB-UniRule"/>
</dbReference>
<dbReference type="GO" id="GO:0003735">
    <property type="term" value="F:structural constituent of ribosome"/>
    <property type="evidence" value="ECO:0007669"/>
    <property type="project" value="InterPro"/>
</dbReference>
<dbReference type="GO" id="GO:0006412">
    <property type="term" value="P:translation"/>
    <property type="evidence" value="ECO:0007669"/>
    <property type="project" value="UniProtKB-UniRule"/>
</dbReference>
<dbReference type="CDD" id="cd02412">
    <property type="entry name" value="KH-II_30S_S3"/>
    <property type="match status" value="1"/>
</dbReference>
<dbReference type="FunFam" id="3.30.1140.32:FF:000006">
    <property type="entry name" value="30S ribosomal protein S3"/>
    <property type="match status" value="1"/>
</dbReference>
<dbReference type="FunFam" id="3.30.300.20:FF:000001">
    <property type="entry name" value="30S ribosomal protein S3"/>
    <property type="match status" value="1"/>
</dbReference>
<dbReference type="Gene3D" id="3.30.300.20">
    <property type="match status" value="1"/>
</dbReference>
<dbReference type="Gene3D" id="3.30.1140.32">
    <property type="entry name" value="Ribosomal protein S3, C-terminal domain"/>
    <property type="match status" value="1"/>
</dbReference>
<dbReference type="HAMAP" id="MF_01309_B">
    <property type="entry name" value="Ribosomal_uS3_B"/>
    <property type="match status" value="1"/>
</dbReference>
<dbReference type="InterPro" id="IPR004087">
    <property type="entry name" value="KH_dom"/>
</dbReference>
<dbReference type="InterPro" id="IPR015946">
    <property type="entry name" value="KH_dom-like_a/b"/>
</dbReference>
<dbReference type="InterPro" id="IPR004044">
    <property type="entry name" value="KH_dom_type_2"/>
</dbReference>
<dbReference type="InterPro" id="IPR009019">
    <property type="entry name" value="KH_sf_prok-type"/>
</dbReference>
<dbReference type="InterPro" id="IPR036419">
    <property type="entry name" value="Ribosomal_S3_C_sf"/>
</dbReference>
<dbReference type="InterPro" id="IPR005704">
    <property type="entry name" value="Ribosomal_uS3_bac-typ"/>
</dbReference>
<dbReference type="InterPro" id="IPR001351">
    <property type="entry name" value="Ribosomal_uS3_C"/>
</dbReference>
<dbReference type="InterPro" id="IPR018280">
    <property type="entry name" value="Ribosomal_uS3_CS"/>
</dbReference>
<dbReference type="NCBIfam" id="TIGR01009">
    <property type="entry name" value="rpsC_bact"/>
    <property type="match status" value="1"/>
</dbReference>
<dbReference type="PANTHER" id="PTHR11760">
    <property type="entry name" value="30S/40S RIBOSOMAL PROTEIN S3"/>
    <property type="match status" value="1"/>
</dbReference>
<dbReference type="PANTHER" id="PTHR11760:SF19">
    <property type="entry name" value="SMALL RIBOSOMAL SUBUNIT PROTEIN US3C"/>
    <property type="match status" value="1"/>
</dbReference>
<dbReference type="Pfam" id="PF07650">
    <property type="entry name" value="KH_2"/>
    <property type="match status" value="1"/>
</dbReference>
<dbReference type="Pfam" id="PF00189">
    <property type="entry name" value="Ribosomal_S3_C"/>
    <property type="match status" value="1"/>
</dbReference>
<dbReference type="SMART" id="SM00322">
    <property type="entry name" value="KH"/>
    <property type="match status" value="1"/>
</dbReference>
<dbReference type="SUPFAM" id="SSF54814">
    <property type="entry name" value="Prokaryotic type KH domain (KH-domain type II)"/>
    <property type="match status" value="1"/>
</dbReference>
<dbReference type="SUPFAM" id="SSF54821">
    <property type="entry name" value="Ribosomal protein S3 C-terminal domain"/>
    <property type="match status" value="1"/>
</dbReference>
<dbReference type="PROSITE" id="PS50823">
    <property type="entry name" value="KH_TYPE_2"/>
    <property type="match status" value="1"/>
</dbReference>
<dbReference type="PROSITE" id="PS00548">
    <property type="entry name" value="RIBOSOMAL_S3"/>
    <property type="match status" value="1"/>
</dbReference>